<dbReference type="EMBL" id="CP000890">
    <property type="protein sequence ID" value="ABX78028.1"/>
    <property type="molecule type" value="Genomic_DNA"/>
</dbReference>
<dbReference type="SMR" id="A9NAF8"/>
<dbReference type="KEGG" id="cbs:COXBURSA331_A0242"/>
<dbReference type="HOGENOM" id="CLU_076303_0_1_6"/>
<dbReference type="GO" id="GO:0032153">
    <property type="term" value="C:cell division site"/>
    <property type="evidence" value="ECO:0007669"/>
    <property type="project" value="TreeGrafter"/>
</dbReference>
<dbReference type="GO" id="GO:0005737">
    <property type="term" value="C:cytoplasm"/>
    <property type="evidence" value="ECO:0007669"/>
    <property type="project" value="UniProtKB-SubCell"/>
</dbReference>
<dbReference type="GO" id="GO:0000917">
    <property type="term" value="P:division septum assembly"/>
    <property type="evidence" value="ECO:0007669"/>
    <property type="project" value="UniProtKB-KW"/>
</dbReference>
<dbReference type="GO" id="GO:0043093">
    <property type="term" value="P:FtsZ-dependent cytokinesis"/>
    <property type="evidence" value="ECO:0007669"/>
    <property type="project" value="UniProtKB-UniRule"/>
</dbReference>
<dbReference type="Gene3D" id="1.10.3900.10">
    <property type="entry name" value="YacF-like"/>
    <property type="match status" value="1"/>
</dbReference>
<dbReference type="Gene3D" id="2.60.440.10">
    <property type="entry name" value="YacF-like domains"/>
    <property type="match status" value="1"/>
</dbReference>
<dbReference type="HAMAP" id="MF_01092">
    <property type="entry name" value="ZapD"/>
    <property type="match status" value="1"/>
</dbReference>
<dbReference type="InterPro" id="IPR009777">
    <property type="entry name" value="ZapD"/>
</dbReference>
<dbReference type="InterPro" id="IPR027462">
    <property type="entry name" value="ZapD_C"/>
</dbReference>
<dbReference type="InterPro" id="IPR036268">
    <property type="entry name" value="ZapD_sf"/>
</dbReference>
<dbReference type="NCBIfam" id="NF003656">
    <property type="entry name" value="PRK05287.1-4"/>
    <property type="match status" value="1"/>
</dbReference>
<dbReference type="PANTHER" id="PTHR39455">
    <property type="entry name" value="CELL DIVISION PROTEIN ZAPD"/>
    <property type="match status" value="1"/>
</dbReference>
<dbReference type="PANTHER" id="PTHR39455:SF1">
    <property type="entry name" value="CELL DIVISION PROTEIN ZAPD"/>
    <property type="match status" value="1"/>
</dbReference>
<dbReference type="Pfam" id="PF07072">
    <property type="entry name" value="ZapD"/>
    <property type="match status" value="1"/>
</dbReference>
<dbReference type="SUPFAM" id="SSF160950">
    <property type="entry name" value="YacF-like"/>
    <property type="match status" value="1"/>
</dbReference>
<feature type="chain" id="PRO_1000084785" description="Cell division protein ZapD">
    <location>
        <begin position="1"/>
        <end position="258"/>
    </location>
</feature>
<protein>
    <recommendedName>
        <fullName evidence="1">Cell division protein ZapD</fullName>
    </recommendedName>
    <alternativeName>
        <fullName evidence="1">Z ring-associated protein D</fullName>
    </alternativeName>
</protein>
<gene>
    <name evidence="1" type="primary">zapD</name>
    <name type="ordered locus">COXBURSA331_A0242</name>
</gene>
<name>ZAPD_COXBR</name>
<sequence length="258" mass="29717">MVATTITYEQPLNEPMRICLRLEHLFRQLHEHIREPAPAASHLAMLALLKALNVIDRPDLKTKLTQTLTQQTSTLLQLKHSPEVDNHKLQGLLDTLDRYVTHLHQTTRKIGEPLRENAFLTQIRSHLYNPAGPCNFTTPAYALWLQQPSENRINDLQNWAKEFEPLINIVNAILQIIRESTSPQNIVARQGFYQQMLNATSPCQLIQLILPIEKNIYPEICAGKHRLVIRFLPLDVNNNENTKQIAEEISFKLNCCRI</sequence>
<keyword id="KW-0131">Cell cycle</keyword>
<keyword id="KW-0132">Cell division</keyword>
<keyword id="KW-0963">Cytoplasm</keyword>
<keyword id="KW-0717">Septation</keyword>
<reference key="1">
    <citation type="submission" date="2007-11" db="EMBL/GenBank/DDBJ databases">
        <title>Genome sequencing of phylogenetically and phenotypically diverse Coxiella burnetii isolates.</title>
        <authorList>
            <person name="Seshadri R."/>
            <person name="Samuel J.E."/>
        </authorList>
    </citation>
    <scope>NUCLEOTIDE SEQUENCE [LARGE SCALE GENOMIC DNA]</scope>
    <source>
        <strain>RSA 331 / Henzerling II</strain>
    </source>
</reference>
<comment type="function">
    <text evidence="1">Cell division factor that enhances FtsZ-ring assembly. Directly interacts with FtsZ and promotes bundling of FtsZ protofilaments, with a reduction in FtsZ GTPase activity.</text>
</comment>
<comment type="subunit">
    <text evidence="1">Interacts with FtsZ.</text>
</comment>
<comment type="subcellular location">
    <subcellularLocation>
        <location evidence="1">Cytoplasm</location>
    </subcellularLocation>
    <text evidence="1">Localizes to mid-cell in an FtsZ-dependent manner.</text>
</comment>
<comment type="similarity">
    <text evidence="1">Belongs to the ZapD family.</text>
</comment>
<organism>
    <name type="scientific">Coxiella burnetii (strain RSA 331 / Henzerling II)</name>
    <dbReference type="NCBI Taxonomy" id="360115"/>
    <lineage>
        <taxon>Bacteria</taxon>
        <taxon>Pseudomonadati</taxon>
        <taxon>Pseudomonadota</taxon>
        <taxon>Gammaproteobacteria</taxon>
        <taxon>Legionellales</taxon>
        <taxon>Coxiellaceae</taxon>
        <taxon>Coxiella</taxon>
    </lineage>
</organism>
<evidence type="ECO:0000255" key="1">
    <source>
        <dbReference type="HAMAP-Rule" id="MF_01092"/>
    </source>
</evidence>
<accession>A9NAF8</accession>
<proteinExistence type="inferred from homology"/>